<evidence type="ECO:0000255" key="1">
    <source>
        <dbReference type="HAMAP-Rule" id="MF_00394"/>
    </source>
</evidence>
<comment type="function">
    <text evidence="1">Catalyzes the reduction of the glycolytic intermediate dihydroxyacetone phosphate (DHAP) to sn-glycerol 3-phosphate (G3P), the key precursor for phospholipid synthesis.</text>
</comment>
<comment type="catalytic activity">
    <reaction evidence="1">
        <text>sn-glycerol 3-phosphate + NAD(+) = dihydroxyacetone phosphate + NADH + H(+)</text>
        <dbReference type="Rhea" id="RHEA:11092"/>
        <dbReference type="ChEBI" id="CHEBI:15378"/>
        <dbReference type="ChEBI" id="CHEBI:57540"/>
        <dbReference type="ChEBI" id="CHEBI:57597"/>
        <dbReference type="ChEBI" id="CHEBI:57642"/>
        <dbReference type="ChEBI" id="CHEBI:57945"/>
        <dbReference type="EC" id="1.1.1.94"/>
    </reaction>
    <physiologicalReaction direction="right-to-left" evidence="1">
        <dbReference type="Rhea" id="RHEA:11094"/>
    </physiologicalReaction>
</comment>
<comment type="catalytic activity">
    <reaction evidence="1">
        <text>sn-glycerol 3-phosphate + NADP(+) = dihydroxyacetone phosphate + NADPH + H(+)</text>
        <dbReference type="Rhea" id="RHEA:11096"/>
        <dbReference type="ChEBI" id="CHEBI:15378"/>
        <dbReference type="ChEBI" id="CHEBI:57597"/>
        <dbReference type="ChEBI" id="CHEBI:57642"/>
        <dbReference type="ChEBI" id="CHEBI:57783"/>
        <dbReference type="ChEBI" id="CHEBI:58349"/>
        <dbReference type="EC" id="1.1.1.94"/>
    </reaction>
    <physiologicalReaction direction="right-to-left" evidence="1">
        <dbReference type="Rhea" id="RHEA:11098"/>
    </physiologicalReaction>
</comment>
<comment type="pathway">
    <text evidence="1">Membrane lipid metabolism; glycerophospholipid metabolism.</text>
</comment>
<comment type="subcellular location">
    <subcellularLocation>
        <location evidence="1">Cytoplasm</location>
    </subcellularLocation>
</comment>
<comment type="similarity">
    <text evidence="1">Belongs to the NAD-dependent glycerol-3-phosphate dehydrogenase family.</text>
</comment>
<dbReference type="EC" id="1.1.1.94" evidence="1"/>
<dbReference type="EMBL" id="CP000529">
    <property type="protein sequence ID" value="ABM36248.1"/>
    <property type="molecule type" value="Genomic_DNA"/>
</dbReference>
<dbReference type="RefSeq" id="WP_011800342.1">
    <property type="nucleotide sequence ID" value="NC_008781.1"/>
</dbReference>
<dbReference type="SMR" id="A1VKS0"/>
<dbReference type="STRING" id="365044.Pnap_0931"/>
<dbReference type="KEGG" id="pna:Pnap_0931"/>
<dbReference type="eggNOG" id="COG0240">
    <property type="taxonomic scope" value="Bacteria"/>
</dbReference>
<dbReference type="HOGENOM" id="CLU_033449_0_2_4"/>
<dbReference type="OrthoDB" id="9812273at2"/>
<dbReference type="UniPathway" id="UPA00940"/>
<dbReference type="Proteomes" id="UP000000644">
    <property type="component" value="Chromosome"/>
</dbReference>
<dbReference type="GO" id="GO:0005829">
    <property type="term" value="C:cytosol"/>
    <property type="evidence" value="ECO:0007669"/>
    <property type="project" value="TreeGrafter"/>
</dbReference>
<dbReference type="GO" id="GO:0047952">
    <property type="term" value="F:glycerol-3-phosphate dehydrogenase [NAD(P)+] activity"/>
    <property type="evidence" value="ECO:0007669"/>
    <property type="project" value="UniProtKB-UniRule"/>
</dbReference>
<dbReference type="GO" id="GO:0051287">
    <property type="term" value="F:NAD binding"/>
    <property type="evidence" value="ECO:0007669"/>
    <property type="project" value="InterPro"/>
</dbReference>
<dbReference type="GO" id="GO:0005975">
    <property type="term" value="P:carbohydrate metabolic process"/>
    <property type="evidence" value="ECO:0007669"/>
    <property type="project" value="InterPro"/>
</dbReference>
<dbReference type="GO" id="GO:0046167">
    <property type="term" value="P:glycerol-3-phosphate biosynthetic process"/>
    <property type="evidence" value="ECO:0007669"/>
    <property type="project" value="UniProtKB-UniRule"/>
</dbReference>
<dbReference type="GO" id="GO:0046168">
    <property type="term" value="P:glycerol-3-phosphate catabolic process"/>
    <property type="evidence" value="ECO:0007669"/>
    <property type="project" value="InterPro"/>
</dbReference>
<dbReference type="GO" id="GO:0006650">
    <property type="term" value="P:glycerophospholipid metabolic process"/>
    <property type="evidence" value="ECO:0007669"/>
    <property type="project" value="UniProtKB-UniRule"/>
</dbReference>
<dbReference type="GO" id="GO:0008654">
    <property type="term" value="P:phospholipid biosynthetic process"/>
    <property type="evidence" value="ECO:0007669"/>
    <property type="project" value="UniProtKB-KW"/>
</dbReference>
<dbReference type="FunFam" id="1.10.1040.10:FF:000001">
    <property type="entry name" value="Glycerol-3-phosphate dehydrogenase [NAD(P)+]"/>
    <property type="match status" value="1"/>
</dbReference>
<dbReference type="Gene3D" id="1.10.1040.10">
    <property type="entry name" value="N-(1-d-carboxylethyl)-l-norvaline Dehydrogenase, domain 2"/>
    <property type="match status" value="1"/>
</dbReference>
<dbReference type="Gene3D" id="3.40.50.720">
    <property type="entry name" value="NAD(P)-binding Rossmann-like Domain"/>
    <property type="match status" value="1"/>
</dbReference>
<dbReference type="HAMAP" id="MF_00394">
    <property type="entry name" value="NAD_Glyc3P_dehydrog"/>
    <property type="match status" value="1"/>
</dbReference>
<dbReference type="InterPro" id="IPR008927">
    <property type="entry name" value="6-PGluconate_DH-like_C_sf"/>
</dbReference>
<dbReference type="InterPro" id="IPR013328">
    <property type="entry name" value="6PGD_dom2"/>
</dbReference>
<dbReference type="InterPro" id="IPR006168">
    <property type="entry name" value="G3P_DH_NAD-dep"/>
</dbReference>
<dbReference type="InterPro" id="IPR006109">
    <property type="entry name" value="G3P_DH_NAD-dep_C"/>
</dbReference>
<dbReference type="InterPro" id="IPR011128">
    <property type="entry name" value="G3P_DH_NAD-dep_N"/>
</dbReference>
<dbReference type="InterPro" id="IPR036291">
    <property type="entry name" value="NAD(P)-bd_dom_sf"/>
</dbReference>
<dbReference type="NCBIfam" id="NF000940">
    <property type="entry name" value="PRK00094.1-2"/>
    <property type="match status" value="1"/>
</dbReference>
<dbReference type="NCBIfam" id="NF000942">
    <property type="entry name" value="PRK00094.1-4"/>
    <property type="match status" value="1"/>
</dbReference>
<dbReference type="PANTHER" id="PTHR11728">
    <property type="entry name" value="GLYCEROL-3-PHOSPHATE DEHYDROGENASE"/>
    <property type="match status" value="1"/>
</dbReference>
<dbReference type="PANTHER" id="PTHR11728:SF1">
    <property type="entry name" value="GLYCEROL-3-PHOSPHATE DEHYDROGENASE [NAD(+)] 2, CHLOROPLASTIC"/>
    <property type="match status" value="1"/>
</dbReference>
<dbReference type="Pfam" id="PF07479">
    <property type="entry name" value="NAD_Gly3P_dh_C"/>
    <property type="match status" value="1"/>
</dbReference>
<dbReference type="Pfam" id="PF01210">
    <property type="entry name" value="NAD_Gly3P_dh_N"/>
    <property type="match status" value="1"/>
</dbReference>
<dbReference type="PIRSF" id="PIRSF000114">
    <property type="entry name" value="Glycerol-3-P_dh"/>
    <property type="match status" value="1"/>
</dbReference>
<dbReference type="PRINTS" id="PR00077">
    <property type="entry name" value="GPDHDRGNASE"/>
</dbReference>
<dbReference type="SUPFAM" id="SSF48179">
    <property type="entry name" value="6-phosphogluconate dehydrogenase C-terminal domain-like"/>
    <property type="match status" value="1"/>
</dbReference>
<dbReference type="SUPFAM" id="SSF51735">
    <property type="entry name" value="NAD(P)-binding Rossmann-fold domains"/>
    <property type="match status" value="1"/>
</dbReference>
<dbReference type="PROSITE" id="PS00957">
    <property type="entry name" value="NAD_G3PDH"/>
    <property type="match status" value="1"/>
</dbReference>
<feature type="chain" id="PRO_1000049533" description="Glycerol-3-phosphate dehydrogenase [NAD(P)+]">
    <location>
        <begin position="1"/>
        <end position="352"/>
    </location>
</feature>
<feature type="active site" description="Proton acceptor" evidence="1">
    <location>
        <position position="208"/>
    </location>
</feature>
<feature type="binding site" evidence="1">
    <location>
        <position position="11"/>
    </location>
    <ligand>
        <name>NADPH</name>
        <dbReference type="ChEBI" id="CHEBI:57783"/>
    </ligand>
</feature>
<feature type="binding site" evidence="1">
    <location>
        <position position="37"/>
    </location>
    <ligand>
        <name>NADPH</name>
        <dbReference type="ChEBI" id="CHEBI:57783"/>
    </ligand>
</feature>
<feature type="binding site" evidence="1">
    <location>
        <position position="112"/>
    </location>
    <ligand>
        <name>NADPH</name>
        <dbReference type="ChEBI" id="CHEBI:57783"/>
    </ligand>
</feature>
<feature type="binding site" evidence="1">
    <location>
        <position position="112"/>
    </location>
    <ligand>
        <name>sn-glycerol 3-phosphate</name>
        <dbReference type="ChEBI" id="CHEBI:57597"/>
    </ligand>
</feature>
<feature type="binding site" evidence="1">
    <location>
        <position position="153"/>
    </location>
    <ligand>
        <name>sn-glycerol 3-phosphate</name>
        <dbReference type="ChEBI" id="CHEBI:57597"/>
    </ligand>
</feature>
<feature type="binding site" evidence="1">
    <location>
        <position position="155"/>
    </location>
    <ligand>
        <name>sn-glycerol 3-phosphate</name>
        <dbReference type="ChEBI" id="CHEBI:57597"/>
    </ligand>
</feature>
<feature type="binding site" evidence="1">
    <location>
        <position position="157"/>
    </location>
    <ligand>
        <name>NADPH</name>
        <dbReference type="ChEBI" id="CHEBI:57783"/>
    </ligand>
</feature>
<feature type="binding site" evidence="1">
    <location>
        <position position="208"/>
    </location>
    <ligand>
        <name>sn-glycerol 3-phosphate</name>
        <dbReference type="ChEBI" id="CHEBI:57597"/>
    </ligand>
</feature>
<feature type="binding site" evidence="1">
    <location>
        <position position="261"/>
    </location>
    <ligand>
        <name>sn-glycerol 3-phosphate</name>
        <dbReference type="ChEBI" id="CHEBI:57597"/>
    </ligand>
</feature>
<feature type="binding site" evidence="1">
    <location>
        <position position="271"/>
    </location>
    <ligand>
        <name>sn-glycerol 3-phosphate</name>
        <dbReference type="ChEBI" id="CHEBI:57597"/>
    </ligand>
</feature>
<feature type="binding site" evidence="1">
    <location>
        <position position="272"/>
    </location>
    <ligand>
        <name>NADPH</name>
        <dbReference type="ChEBI" id="CHEBI:57783"/>
    </ligand>
</feature>
<feature type="binding site" evidence="1">
    <location>
        <position position="272"/>
    </location>
    <ligand>
        <name>sn-glycerol 3-phosphate</name>
        <dbReference type="ChEBI" id="CHEBI:57597"/>
    </ligand>
</feature>
<feature type="binding site" evidence="1">
    <location>
        <position position="273"/>
    </location>
    <ligand>
        <name>sn-glycerol 3-phosphate</name>
        <dbReference type="ChEBI" id="CHEBI:57597"/>
    </ligand>
</feature>
<feature type="binding site" evidence="1">
    <location>
        <position position="296"/>
    </location>
    <ligand>
        <name>NADPH</name>
        <dbReference type="ChEBI" id="CHEBI:57783"/>
    </ligand>
</feature>
<feature type="binding site" evidence="1">
    <location>
        <position position="298"/>
    </location>
    <ligand>
        <name>NADPH</name>
        <dbReference type="ChEBI" id="CHEBI:57783"/>
    </ligand>
</feature>
<protein>
    <recommendedName>
        <fullName evidence="1">Glycerol-3-phosphate dehydrogenase [NAD(P)+]</fullName>
        <ecNumber evidence="1">1.1.1.94</ecNumber>
    </recommendedName>
    <alternativeName>
        <fullName evidence="1">NAD(P)(+)-dependent glycerol-3-phosphate dehydrogenase</fullName>
    </alternativeName>
    <alternativeName>
        <fullName evidence="1">NAD(P)H-dependent dihydroxyacetone-phosphate reductase</fullName>
    </alternativeName>
</protein>
<accession>A1VKS0</accession>
<name>GPDA_POLNA</name>
<reference key="1">
    <citation type="journal article" date="2009" name="Environ. Microbiol.">
        <title>The genome of Polaromonas naphthalenivorans strain CJ2, isolated from coal tar-contaminated sediment, reveals physiological and metabolic versatility and evolution through extensive horizontal gene transfer.</title>
        <authorList>
            <person name="Yagi J.M."/>
            <person name="Sims D."/>
            <person name="Brettin T."/>
            <person name="Bruce D."/>
            <person name="Madsen E.L."/>
        </authorList>
    </citation>
    <scope>NUCLEOTIDE SEQUENCE [LARGE SCALE GENOMIC DNA]</scope>
    <source>
        <strain>CJ2</strain>
    </source>
</reference>
<sequence>MKIAVLGAGAWGTALAVNAARAAGAGVTRHQVTLWARNAAQVQALQAERANTRYLPGIALPASLLLQGGGEASLGQAVSGQDLIILATPVSAARSMLTQLKHAAVPVAWLSKGFEAAVFAEPASASLAKPFGLMVHEVRAQVAPDLRAGVFSGPSFALEVARGQPTALVAASEHAEVREALVAAFHGASLRVYASDDMVGVEVGGAVKNVMAIAAGLCDGLQLGLNARAALITRGLAEITRLGVALGARAETFTGLSGLGDLVLTATGDLSRNRKVGLLLAQGKTLAEVLESLGHVAEGVYCARTVVQRAASLGVDMPIAQSVVALLDGKLKASEAVALLMEREPKTELDCY</sequence>
<gene>
    <name evidence="1" type="primary">gpsA</name>
    <name type="ordered locus">Pnap_0931</name>
</gene>
<organism>
    <name type="scientific">Polaromonas naphthalenivorans (strain CJ2)</name>
    <dbReference type="NCBI Taxonomy" id="365044"/>
    <lineage>
        <taxon>Bacteria</taxon>
        <taxon>Pseudomonadati</taxon>
        <taxon>Pseudomonadota</taxon>
        <taxon>Betaproteobacteria</taxon>
        <taxon>Burkholderiales</taxon>
        <taxon>Comamonadaceae</taxon>
        <taxon>Polaromonas</taxon>
    </lineage>
</organism>
<keyword id="KW-0963">Cytoplasm</keyword>
<keyword id="KW-0444">Lipid biosynthesis</keyword>
<keyword id="KW-0443">Lipid metabolism</keyword>
<keyword id="KW-0520">NAD</keyword>
<keyword id="KW-0521">NADP</keyword>
<keyword id="KW-0547">Nucleotide-binding</keyword>
<keyword id="KW-0560">Oxidoreductase</keyword>
<keyword id="KW-0594">Phospholipid biosynthesis</keyword>
<keyword id="KW-1208">Phospholipid metabolism</keyword>
<keyword id="KW-1185">Reference proteome</keyword>
<proteinExistence type="inferred from homology"/>